<organism>
    <name type="scientific">Thermosynechococcus vestitus (strain NIES-2133 / IAM M-273 / BP-1)</name>
    <dbReference type="NCBI Taxonomy" id="197221"/>
    <lineage>
        <taxon>Bacteria</taxon>
        <taxon>Bacillati</taxon>
        <taxon>Cyanobacteriota</taxon>
        <taxon>Cyanophyceae</taxon>
        <taxon>Acaryochloridales</taxon>
        <taxon>Thermosynechococcaceae</taxon>
        <taxon>Thermosynechococcus</taxon>
    </lineage>
</organism>
<protein>
    <recommendedName>
        <fullName evidence="1">Leucyl/phenylalanyl-tRNA--protein transferase</fullName>
        <ecNumber evidence="1">2.3.2.6</ecNumber>
    </recommendedName>
    <alternativeName>
        <fullName evidence="1">L/F-transferase</fullName>
    </alternativeName>
    <alternativeName>
        <fullName evidence="1">Leucyltransferase</fullName>
    </alternativeName>
    <alternativeName>
        <fullName evidence="1">Phenyalanyltransferase</fullName>
    </alternativeName>
</protein>
<reference key="1">
    <citation type="journal article" date="2002" name="DNA Res.">
        <title>Complete genome structure of the thermophilic cyanobacterium Thermosynechococcus elongatus BP-1.</title>
        <authorList>
            <person name="Nakamura Y."/>
            <person name="Kaneko T."/>
            <person name="Sato S."/>
            <person name="Ikeuchi M."/>
            <person name="Katoh H."/>
            <person name="Sasamoto S."/>
            <person name="Watanabe A."/>
            <person name="Iriguchi M."/>
            <person name="Kawashima K."/>
            <person name="Kimura T."/>
            <person name="Kishida Y."/>
            <person name="Kiyokawa C."/>
            <person name="Kohara M."/>
            <person name="Matsumoto M."/>
            <person name="Matsuno A."/>
            <person name="Nakazaki N."/>
            <person name="Shimpo S."/>
            <person name="Sugimoto M."/>
            <person name="Takeuchi C."/>
            <person name="Yamada M."/>
            <person name="Tabata S."/>
        </authorList>
    </citation>
    <scope>NUCLEOTIDE SEQUENCE [LARGE SCALE GENOMIC DNA]</scope>
    <source>
        <strain>NIES-2133 / IAM M-273 / BP-1</strain>
    </source>
</reference>
<accession>Q8DKJ8</accession>
<feature type="chain" id="PRO_0000207245" description="Leucyl/phenylalanyl-tRNA--protein transferase">
    <location>
        <begin position="1"/>
        <end position="196"/>
    </location>
</feature>
<proteinExistence type="inferred from homology"/>
<evidence type="ECO:0000255" key="1">
    <source>
        <dbReference type="HAMAP-Rule" id="MF_00688"/>
    </source>
</evidence>
<evidence type="ECO:0000305" key="2"/>
<sequence>MEISQAEWVRDTFIDHRYAQGYFLMGAGDRLEWYTSRQRALIPLDERFRYPASLRRVLNQNRFQVAINRDFSAVVEGCADRPMTWITPRLKEVYHLLYATGWAVSFETWQGDELAGGILGIVIGGAFIGESMFYRIPNGSKVAMVKLVEHLRQRGFLLFDAQLQNPHLERFGAYVVSPRKYRQLLAQAIRKPCQFL</sequence>
<dbReference type="EC" id="2.3.2.6" evidence="1"/>
<dbReference type="EMBL" id="BA000039">
    <property type="protein sequence ID" value="BAC08413.1"/>
    <property type="status" value="ALT_INIT"/>
    <property type="molecule type" value="Genomic_DNA"/>
</dbReference>
<dbReference type="RefSeq" id="NP_681651.1">
    <property type="nucleotide sequence ID" value="NC_004113.1"/>
</dbReference>
<dbReference type="RefSeq" id="WP_164920768.1">
    <property type="nucleotide sequence ID" value="NC_004113.1"/>
</dbReference>
<dbReference type="SMR" id="Q8DKJ8"/>
<dbReference type="STRING" id="197221.gene:10747453"/>
<dbReference type="EnsemblBacteria" id="BAC08413">
    <property type="protein sequence ID" value="BAC08413"/>
    <property type="gene ID" value="BAC08413"/>
</dbReference>
<dbReference type="KEGG" id="tel:tlr0861"/>
<dbReference type="PATRIC" id="fig|197221.4.peg.906"/>
<dbReference type="eggNOG" id="COG2360">
    <property type="taxonomic scope" value="Bacteria"/>
</dbReference>
<dbReference type="Proteomes" id="UP000000440">
    <property type="component" value="Chromosome"/>
</dbReference>
<dbReference type="GO" id="GO:0005737">
    <property type="term" value="C:cytoplasm"/>
    <property type="evidence" value="ECO:0007669"/>
    <property type="project" value="UniProtKB-SubCell"/>
</dbReference>
<dbReference type="GO" id="GO:0008914">
    <property type="term" value="F:leucyl-tRNA--protein transferase activity"/>
    <property type="evidence" value="ECO:0007669"/>
    <property type="project" value="UniProtKB-UniRule"/>
</dbReference>
<dbReference type="GO" id="GO:0030163">
    <property type="term" value="P:protein catabolic process"/>
    <property type="evidence" value="ECO:0007669"/>
    <property type="project" value="UniProtKB-UniRule"/>
</dbReference>
<dbReference type="Gene3D" id="3.40.630.70">
    <property type="entry name" value="Leucyl/phenylalanyl-tRNA-protein transferase, C-terminal domain"/>
    <property type="match status" value="1"/>
</dbReference>
<dbReference type="HAMAP" id="MF_00688">
    <property type="entry name" value="Leu_Phe_trans"/>
    <property type="match status" value="1"/>
</dbReference>
<dbReference type="InterPro" id="IPR016181">
    <property type="entry name" value="Acyl_CoA_acyltransferase"/>
</dbReference>
<dbReference type="InterPro" id="IPR004616">
    <property type="entry name" value="Leu/Phe-tRNA_Trfase"/>
</dbReference>
<dbReference type="InterPro" id="IPR042203">
    <property type="entry name" value="Leu/Phe-tRNA_Trfase_C"/>
</dbReference>
<dbReference type="NCBIfam" id="TIGR00667">
    <property type="entry name" value="aat"/>
    <property type="match status" value="1"/>
</dbReference>
<dbReference type="PANTHER" id="PTHR30098">
    <property type="entry name" value="LEUCYL/PHENYLALANYL-TRNA--PROTEIN TRANSFERASE"/>
    <property type="match status" value="1"/>
</dbReference>
<dbReference type="PANTHER" id="PTHR30098:SF2">
    <property type="entry name" value="LEUCYL_PHENYLALANYL-TRNA--PROTEIN TRANSFERASE"/>
    <property type="match status" value="1"/>
</dbReference>
<dbReference type="Pfam" id="PF03588">
    <property type="entry name" value="Leu_Phe_trans"/>
    <property type="match status" value="1"/>
</dbReference>
<dbReference type="SUPFAM" id="SSF55729">
    <property type="entry name" value="Acyl-CoA N-acyltransferases (Nat)"/>
    <property type="match status" value="1"/>
</dbReference>
<comment type="function">
    <text evidence="1">Functions in the N-end rule pathway of protein degradation where it conjugates Leu, Phe and, less efficiently, Met from aminoacyl-tRNAs to the N-termini of proteins containing an N-terminal arginine or lysine.</text>
</comment>
<comment type="catalytic activity">
    <reaction evidence="1">
        <text>N-terminal L-lysyl-[protein] + L-leucyl-tRNA(Leu) = N-terminal L-leucyl-L-lysyl-[protein] + tRNA(Leu) + H(+)</text>
        <dbReference type="Rhea" id="RHEA:12340"/>
        <dbReference type="Rhea" id="RHEA-COMP:9613"/>
        <dbReference type="Rhea" id="RHEA-COMP:9622"/>
        <dbReference type="Rhea" id="RHEA-COMP:12670"/>
        <dbReference type="Rhea" id="RHEA-COMP:12671"/>
        <dbReference type="ChEBI" id="CHEBI:15378"/>
        <dbReference type="ChEBI" id="CHEBI:65249"/>
        <dbReference type="ChEBI" id="CHEBI:78442"/>
        <dbReference type="ChEBI" id="CHEBI:78494"/>
        <dbReference type="ChEBI" id="CHEBI:133043"/>
        <dbReference type="EC" id="2.3.2.6"/>
    </reaction>
</comment>
<comment type="catalytic activity">
    <reaction evidence="1">
        <text>N-terminal L-arginyl-[protein] + L-leucyl-tRNA(Leu) = N-terminal L-leucyl-L-arginyl-[protein] + tRNA(Leu) + H(+)</text>
        <dbReference type="Rhea" id="RHEA:50416"/>
        <dbReference type="Rhea" id="RHEA-COMP:9613"/>
        <dbReference type="Rhea" id="RHEA-COMP:9622"/>
        <dbReference type="Rhea" id="RHEA-COMP:12672"/>
        <dbReference type="Rhea" id="RHEA-COMP:12673"/>
        <dbReference type="ChEBI" id="CHEBI:15378"/>
        <dbReference type="ChEBI" id="CHEBI:64719"/>
        <dbReference type="ChEBI" id="CHEBI:78442"/>
        <dbReference type="ChEBI" id="CHEBI:78494"/>
        <dbReference type="ChEBI" id="CHEBI:133044"/>
        <dbReference type="EC" id="2.3.2.6"/>
    </reaction>
</comment>
<comment type="catalytic activity">
    <reaction evidence="1">
        <text>L-phenylalanyl-tRNA(Phe) + an N-terminal L-alpha-aminoacyl-[protein] = an N-terminal L-phenylalanyl-L-alpha-aminoacyl-[protein] + tRNA(Phe)</text>
        <dbReference type="Rhea" id="RHEA:43632"/>
        <dbReference type="Rhea" id="RHEA-COMP:9668"/>
        <dbReference type="Rhea" id="RHEA-COMP:9699"/>
        <dbReference type="Rhea" id="RHEA-COMP:10636"/>
        <dbReference type="Rhea" id="RHEA-COMP:10637"/>
        <dbReference type="ChEBI" id="CHEBI:78442"/>
        <dbReference type="ChEBI" id="CHEBI:78531"/>
        <dbReference type="ChEBI" id="CHEBI:78597"/>
        <dbReference type="ChEBI" id="CHEBI:83561"/>
        <dbReference type="EC" id="2.3.2.6"/>
    </reaction>
</comment>
<comment type="subcellular location">
    <subcellularLocation>
        <location evidence="1">Cytoplasm</location>
    </subcellularLocation>
</comment>
<comment type="similarity">
    <text evidence="1">Belongs to the L/F-transferase family.</text>
</comment>
<comment type="sequence caution" evidence="2">
    <conflict type="erroneous initiation">
        <sequence resource="EMBL-CDS" id="BAC08413"/>
    </conflict>
</comment>
<keyword id="KW-0012">Acyltransferase</keyword>
<keyword id="KW-0963">Cytoplasm</keyword>
<keyword id="KW-1185">Reference proteome</keyword>
<keyword id="KW-0808">Transferase</keyword>
<name>LFTR_THEVB</name>
<gene>
    <name evidence="1" type="primary">aat</name>
    <name type="ordered locus">tlr0861</name>
</gene>